<dbReference type="PIR" id="S07356">
    <property type="entry name" value="R5NT2D"/>
</dbReference>
<dbReference type="SMR" id="P21434"/>
<dbReference type="GO" id="GO:0009507">
    <property type="term" value="C:chloroplast"/>
    <property type="evidence" value="ECO:0007669"/>
    <property type="project" value="UniProtKB-SubCell"/>
</dbReference>
<dbReference type="GO" id="GO:0005762">
    <property type="term" value="C:mitochondrial large ribosomal subunit"/>
    <property type="evidence" value="ECO:0007669"/>
    <property type="project" value="TreeGrafter"/>
</dbReference>
<dbReference type="GO" id="GO:0003723">
    <property type="term" value="F:RNA binding"/>
    <property type="evidence" value="ECO:0007669"/>
    <property type="project" value="InterPro"/>
</dbReference>
<dbReference type="GO" id="GO:0003735">
    <property type="term" value="F:structural constituent of ribosome"/>
    <property type="evidence" value="ECO:0007669"/>
    <property type="project" value="InterPro"/>
</dbReference>
<dbReference type="GO" id="GO:0016740">
    <property type="term" value="F:transferase activity"/>
    <property type="evidence" value="ECO:0007669"/>
    <property type="project" value="InterPro"/>
</dbReference>
<dbReference type="GO" id="GO:0032543">
    <property type="term" value="P:mitochondrial translation"/>
    <property type="evidence" value="ECO:0007669"/>
    <property type="project" value="TreeGrafter"/>
</dbReference>
<dbReference type="FunFam" id="2.30.30.30:FF:000008">
    <property type="entry name" value="50S ribosomal protein L2, chloroplastic"/>
    <property type="match status" value="1"/>
</dbReference>
<dbReference type="FunFam" id="2.40.50.140:FF:000029">
    <property type="entry name" value="50S ribosomal protein L2, chloroplastic"/>
    <property type="match status" value="1"/>
</dbReference>
<dbReference type="Gene3D" id="2.30.30.30">
    <property type="match status" value="1"/>
</dbReference>
<dbReference type="Gene3D" id="2.40.50.140">
    <property type="entry name" value="Nucleic acid-binding proteins"/>
    <property type="match status" value="1"/>
</dbReference>
<dbReference type="Gene3D" id="4.10.950.10">
    <property type="entry name" value="Ribosomal protein L2, domain 3"/>
    <property type="match status" value="1"/>
</dbReference>
<dbReference type="InterPro" id="IPR012340">
    <property type="entry name" value="NA-bd_OB-fold"/>
</dbReference>
<dbReference type="InterPro" id="IPR014722">
    <property type="entry name" value="Rib_uL2_dom2"/>
</dbReference>
<dbReference type="InterPro" id="IPR002171">
    <property type="entry name" value="Ribosomal_uL2"/>
</dbReference>
<dbReference type="InterPro" id="IPR005880">
    <property type="entry name" value="Ribosomal_uL2_bac/org-type"/>
</dbReference>
<dbReference type="InterPro" id="IPR022669">
    <property type="entry name" value="Ribosomal_uL2_C"/>
</dbReference>
<dbReference type="InterPro" id="IPR022671">
    <property type="entry name" value="Ribosomal_uL2_CS"/>
</dbReference>
<dbReference type="InterPro" id="IPR014726">
    <property type="entry name" value="Ribosomal_uL2_dom3"/>
</dbReference>
<dbReference type="InterPro" id="IPR022666">
    <property type="entry name" value="Ribosomal_uL2_RNA-bd_dom"/>
</dbReference>
<dbReference type="InterPro" id="IPR008991">
    <property type="entry name" value="Translation_prot_SH3-like_sf"/>
</dbReference>
<dbReference type="NCBIfam" id="TIGR01171">
    <property type="entry name" value="rplB_bact"/>
    <property type="match status" value="1"/>
</dbReference>
<dbReference type="PANTHER" id="PTHR13691:SF5">
    <property type="entry name" value="LARGE RIBOSOMAL SUBUNIT PROTEIN UL2M"/>
    <property type="match status" value="1"/>
</dbReference>
<dbReference type="PANTHER" id="PTHR13691">
    <property type="entry name" value="RIBOSOMAL PROTEIN L2"/>
    <property type="match status" value="1"/>
</dbReference>
<dbReference type="Pfam" id="PF00181">
    <property type="entry name" value="Ribosomal_L2"/>
    <property type="match status" value="1"/>
</dbReference>
<dbReference type="Pfam" id="PF03947">
    <property type="entry name" value="Ribosomal_L2_C"/>
    <property type="match status" value="1"/>
</dbReference>
<dbReference type="SMART" id="SM01383">
    <property type="entry name" value="Ribosomal_L2"/>
    <property type="match status" value="1"/>
</dbReference>
<dbReference type="SMART" id="SM01382">
    <property type="entry name" value="Ribosomal_L2_C"/>
    <property type="match status" value="1"/>
</dbReference>
<dbReference type="SUPFAM" id="SSF50249">
    <property type="entry name" value="Nucleic acid-binding proteins"/>
    <property type="match status" value="1"/>
</dbReference>
<dbReference type="SUPFAM" id="SSF50104">
    <property type="entry name" value="Translation proteins SH3-like domain"/>
    <property type="match status" value="1"/>
</dbReference>
<dbReference type="PROSITE" id="PS00467">
    <property type="entry name" value="RIBOSOMAL_L2"/>
    <property type="match status" value="1"/>
</dbReference>
<feature type="chain" id="PRO_0000129685" description="Large ribosomal subunit protein uL2c">
    <location>
        <begin position="1"/>
        <end position="266"/>
    </location>
</feature>
<feature type="region of interest" description="Disordered" evidence="3">
    <location>
        <begin position="1"/>
        <end position="24"/>
    </location>
</feature>
<feature type="compositionally biased region" description="Polar residues" evidence="3">
    <location>
        <begin position="7"/>
        <end position="24"/>
    </location>
</feature>
<geneLocation type="chloroplast"/>
<accession>P21434</accession>
<proteinExistence type="inferred from homology"/>
<evidence type="ECO:0000250" key="1"/>
<evidence type="ECO:0000255" key="2">
    <source>
        <dbReference type="HAMAP-Rule" id="MF_01320"/>
    </source>
</evidence>
<evidence type="ECO:0000256" key="3">
    <source>
        <dbReference type="SAM" id="MobiDB-lite"/>
    </source>
</evidence>
<evidence type="ECO:0000305" key="4"/>
<sequence length="266" mass="28901">MAIHLYKTSTPSTRNGTVDSQVKSNPRNNLIYGQHHCGKGRNARGIITARHRGGGHKRLYRKIDFRRNEKDIYGRIVTIEYDPNRNAYICLIHYGDGEKRYILHPRGAIIGDTIVSGTEVPIKMGNALPLTDMPLGTAIHNIEITLGKGGQLARAAGAVAKLIAKEGKSATLKLPSGEVRSISKNCSATVGQVGNVGVNQKSLGRAGSKRWLGKRPVVRGVVMNPVDHPMGVVKGEPQLVEKNPQPLGVILHLEEEVEKGINIVII</sequence>
<keyword id="KW-0150">Chloroplast</keyword>
<keyword id="KW-0934">Plastid</keyword>
<keyword id="KW-0687">Ribonucleoprotein</keyword>
<keyword id="KW-0689">Ribosomal protein</keyword>
<comment type="subunit">
    <text evidence="1">Part of the 50S ribosomal subunit.</text>
</comment>
<comment type="subcellular location">
    <subcellularLocation>
        <location>Plastid</location>
        <location>Chloroplast</location>
    </subcellularLocation>
</comment>
<comment type="similarity">
    <text evidence="4">Belongs to the universal ribosomal protein uL2 family.</text>
</comment>
<reference key="1">
    <citation type="journal article" date="1984" name="Nucleic Acids Res.">
        <title>Junctions of the large single copy region and the inverted repeats in Spinacia oleracea and Nicotiana debneyi chloroplast DNA: sequence of the genes for tRNAHis and the ribosomal proteins S19 and L2.</title>
        <authorList>
            <person name="Zurawski G."/>
            <person name="Bottomley W."/>
            <person name="Whitfeld P.R."/>
        </authorList>
    </citation>
    <scope>NUCLEOTIDE SEQUENCE [GENOMIC DNA]</scope>
</reference>
<gene>
    <name type="primary">rpl2</name>
</gene>
<organism>
    <name type="scientific">Nicotiana debneyi</name>
    <name type="common">Debney's tobacco</name>
    <dbReference type="NCBI Taxonomy" id="4089"/>
    <lineage>
        <taxon>Eukaryota</taxon>
        <taxon>Viridiplantae</taxon>
        <taxon>Streptophyta</taxon>
        <taxon>Embryophyta</taxon>
        <taxon>Tracheophyta</taxon>
        <taxon>Spermatophyta</taxon>
        <taxon>Magnoliopsida</taxon>
        <taxon>eudicotyledons</taxon>
        <taxon>Gunneridae</taxon>
        <taxon>Pentapetalae</taxon>
        <taxon>asterids</taxon>
        <taxon>lamiids</taxon>
        <taxon>Solanales</taxon>
        <taxon>Solanaceae</taxon>
        <taxon>Nicotianoideae</taxon>
        <taxon>Nicotianeae</taxon>
        <taxon>Nicotiana</taxon>
    </lineage>
</organism>
<name>RK2_NICDE</name>
<protein>
    <recommendedName>
        <fullName evidence="2">Large ribosomal subunit protein uL2c</fullName>
    </recommendedName>
    <alternativeName>
        <fullName evidence="4">50S ribosomal protein L2, chloroplastic</fullName>
    </alternativeName>
</protein>